<protein>
    <recommendedName>
        <fullName>ATP synthase subunit alpha, chloroplastic</fullName>
        <ecNumber>7.1.2.2</ecNumber>
    </recommendedName>
    <alternativeName>
        <fullName>ATP synthase F1 sector subunit alpha</fullName>
    </alternativeName>
    <alternativeName>
        <fullName>F-ATPase subunit alpha</fullName>
    </alternativeName>
</protein>
<accession>P26965</accession>
<comment type="function">
    <text>Produces ATP from ADP in the presence of a proton gradient across the membrane. The alpha chain is a regulatory subunit.</text>
</comment>
<comment type="catalytic activity">
    <reaction evidence="2">
        <text>ATP + H2O + 4 H(+)(in) = ADP + phosphate + 5 H(+)(out)</text>
        <dbReference type="Rhea" id="RHEA:57720"/>
        <dbReference type="ChEBI" id="CHEBI:15377"/>
        <dbReference type="ChEBI" id="CHEBI:15378"/>
        <dbReference type="ChEBI" id="CHEBI:30616"/>
        <dbReference type="ChEBI" id="CHEBI:43474"/>
        <dbReference type="ChEBI" id="CHEBI:456216"/>
        <dbReference type="EC" id="7.1.2.2"/>
    </reaction>
</comment>
<comment type="subunit">
    <text evidence="1">F-type ATPases have 2 components, CF(1) - the catalytic core - and CF(0) - the membrane proton channel. CF(1) has five subunits: alpha(3), beta(3), gamma(1), delta(1), epsilon(1). CF(0) has four main subunits: a, b, b' and c (By similarity).</text>
</comment>
<comment type="subcellular location">
    <subcellularLocation>
        <location evidence="1">Plastid</location>
        <location evidence="1">Chloroplast thylakoid membrane</location>
        <topology evidence="1">Peripheral membrane protein</topology>
    </subcellularLocation>
</comment>
<comment type="similarity">
    <text evidence="3">Belongs to the ATPase alpha/beta chains family.</text>
</comment>
<dbReference type="EC" id="7.1.2.2"/>
<dbReference type="EMBL" id="X55877">
    <property type="protein sequence ID" value="CAA39362.1"/>
    <property type="molecule type" value="Genomic_DNA"/>
</dbReference>
<dbReference type="PIR" id="S17432">
    <property type="entry name" value="S17432"/>
</dbReference>
<dbReference type="SMR" id="P26965"/>
<dbReference type="GO" id="GO:0009535">
    <property type="term" value="C:chloroplast thylakoid membrane"/>
    <property type="evidence" value="ECO:0007669"/>
    <property type="project" value="UniProtKB-SubCell"/>
</dbReference>
<dbReference type="GO" id="GO:0045259">
    <property type="term" value="C:proton-transporting ATP synthase complex"/>
    <property type="evidence" value="ECO:0007669"/>
    <property type="project" value="UniProtKB-KW"/>
</dbReference>
<dbReference type="GO" id="GO:0005524">
    <property type="term" value="F:ATP binding"/>
    <property type="evidence" value="ECO:0007669"/>
    <property type="project" value="UniProtKB-KW"/>
</dbReference>
<dbReference type="GO" id="GO:0006754">
    <property type="term" value="P:ATP biosynthetic process"/>
    <property type="evidence" value="ECO:0007669"/>
    <property type="project" value="UniProtKB-KW"/>
</dbReference>
<dbReference type="GO" id="GO:1902600">
    <property type="term" value="P:proton transmembrane transport"/>
    <property type="evidence" value="ECO:0007669"/>
    <property type="project" value="UniProtKB-KW"/>
</dbReference>
<keyword id="KW-0066">ATP synthesis</keyword>
<keyword id="KW-0067">ATP-binding</keyword>
<keyword id="KW-0139">CF(1)</keyword>
<keyword id="KW-0150">Chloroplast</keyword>
<keyword id="KW-0375">Hydrogen ion transport</keyword>
<keyword id="KW-0406">Ion transport</keyword>
<keyword id="KW-0472">Membrane</keyword>
<keyword id="KW-0547">Nucleotide-binding</keyword>
<keyword id="KW-0934">Plastid</keyword>
<keyword id="KW-0793">Thylakoid</keyword>
<keyword id="KW-1278">Translocase</keyword>
<keyword id="KW-0813">Transport</keyword>
<geneLocation type="chloroplast"/>
<gene>
    <name type="primary">atpA</name>
</gene>
<sequence>DIIMSTNTFSEEAEALLKEALETYLKEFA</sequence>
<reference key="1">
    <citation type="journal article" date="1991" name="Plant Mol. Biol.">
        <title>Nucleotide sequence of the large subunit of ribulose-1,5-bisphosphate carboxylase/oxygenase from the green alga Bryopsis maxima.</title>
        <authorList>
            <person name="Kono M."/>
            <person name="Satoh H."/>
            <person name="Okabe Y."/>
            <person name="Abe Y."/>
            <person name="Nakayama K."/>
            <person name="Okada M."/>
        </authorList>
    </citation>
    <scope>NUCLEOTIDE SEQUENCE [GENOMIC DNA]</scope>
</reference>
<organism>
    <name type="scientific">Bryopsis maxima</name>
    <name type="common">Green alga</name>
    <dbReference type="NCBI Taxonomy" id="3129"/>
    <lineage>
        <taxon>Eukaryota</taxon>
        <taxon>Viridiplantae</taxon>
        <taxon>Chlorophyta</taxon>
        <taxon>Ulvophyceae</taxon>
        <taxon>TCBD clade</taxon>
        <taxon>Bryopsidales</taxon>
        <taxon>Bryopsidineae</taxon>
        <taxon>Bryopsidaceae</taxon>
        <taxon>Bryopsis</taxon>
    </lineage>
</organism>
<evidence type="ECO:0000250" key="1"/>
<evidence type="ECO:0000255" key="2">
    <source>
        <dbReference type="PROSITE-ProRule" id="PRU10106"/>
    </source>
</evidence>
<evidence type="ECO:0000305" key="3"/>
<proteinExistence type="inferred from homology"/>
<name>ATPA_BRYMA</name>
<feature type="chain" id="PRO_0000144371" description="ATP synthase subunit alpha, chloroplastic">
    <location>
        <begin position="1" status="less than"/>
        <end position="29"/>
    </location>
</feature>
<feature type="non-terminal residue">
    <location>
        <position position="1"/>
    </location>
</feature>